<evidence type="ECO:0000250" key="1">
    <source>
        <dbReference type="UniProtKB" id="P24864"/>
    </source>
</evidence>
<evidence type="ECO:0000256" key="2">
    <source>
        <dbReference type="SAM" id="MobiDB-lite"/>
    </source>
</evidence>
<evidence type="ECO:0000305" key="3"/>
<organism>
    <name type="scientific">Xenopus laevis</name>
    <name type="common">African clawed frog</name>
    <dbReference type="NCBI Taxonomy" id="8355"/>
    <lineage>
        <taxon>Eukaryota</taxon>
        <taxon>Metazoa</taxon>
        <taxon>Chordata</taxon>
        <taxon>Craniata</taxon>
        <taxon>Vertebrata</taxon>
        <taxon>Euteleostomi</taxon>
        <taxon>Amphibia</taxon>
        <taxon>Batrachia</taxon>
        <taxon>Anura</taxon>
        <taxon>Pipoidea</taxon>
        <taxon>Pipidae</taxon>
        <taxon>Xenopodinae</taxon>
        <taxon>Xenopus</taxon>
        <taxon>Xenopus</taxon>
    </lineage>
</organism>
<accession>P50756</accession>
<accession>Q6DD61</accession>
<comment type="function">
    <text>Essential for the control of the cell cycle at the G1/S (start) transition.</text>
</comment>
<comment type="subunit">
    <text evidence="1">Interacts with CDK2 protein kinase to form a serine/threonine kinase holoenzyme complex. The cyclin subunit imparts substrate specificity to the complex.</text>
</comment>
<comment type="subcellular location">
    <subcellularLocation>
        <location evidence="1">Nucleus</location>
    </subcellularLocation>
</comment>
<comment type="PTM">
    <text evidence="1">Phosphorylation by CDK2 triggers its release from CDK2 and degradation via the ubiquitin proteasome pathway.</text>
</comment>
<comment type="similarity">
    <text evidence="3">Belongs to the cyclin family. Cyclin E subfamily.</text>
</comment>
<feature type="chain" id="PRO_0000080454" description="G1/S-specific cyclin-E1">
    <location>
        <begin position="1"/>
        <end position="408"/>
    </location>
</feature>
<feature type="region of interest" description="Disordered" evidence="2">
    <location>
        <begin position="1"/>
        <end position="23"/>
    </location>
</feature>
<feature type="region of interest" description="Disordered" evidence="2">
    <location>
        <begin position="56"/>
        <end position="85"/>
    </location>
</feature>
<feature type="region of interest" description="Disordered" evidence="2">
    <location>
        <begin position="385"/>
        <end position="408"/>
    </location>
</feature>
<feature type="modified residue" description="Phosphothreonine" evidence="1">
    <location>
        <position position="394"/>
    </location>
</feature>
<reference key="1">
    <citation type="submission" date="1993-06" db="EMBL/GenBank/DDBJ databases">
        <authorList>
            <person name="Couturier A."/>
            <person name="Philippe M."/>
        </authorList>
    </citation>
    <scope>NUCLEOTIDE SEQUENCE [MRNA]</scope>
</reference>
<reference key="2">
    <citation type="journal article" date="1996" name="J. Cell Sci.">
        <title>Xenopus cyclin E, a nuclear phosphoprotein, accumulates when oocytes gain the ability to initiate DNA replication.</title>
        <authorList>
            <person name="Chevalier S."/>
            <person name="Couturier A."/>
            <person name="Chartrain I."/>
            <person name="le Guellec R."/>
            <person name="Beckhelling C."/>
            <person name="le Guellec K."/>
            <person name="Philippe M."/>
            <person name="Ford C.C."/>
        </authorList>
    </citation>
    <scope>NUCLEOTIDE SEQUENCE [MRNA]</scope>
</reference>
<reference key="3">
    <citation type="submission" date="2004-07" db="EMBL/GenBank/DDBJ databases">
        <authorList>
            <consortium name="NIH - Xenopus Gene Collection (XGC) project"/>
        </authorList>
    </citation>
    <scope>NUCLEOTIDE SEQUENCE [LARGE SCALE MRNA]</scope>
    <source>
        <tissue>Embryo</tissue>
    </source>
</reference>
<name>CCNE1_XENLA</name>
<gene>
    <name type="primary">cyce1</name>
</gene>
<sequence length="408" mass="47141">MPVISNPAVEKSTKDEGTASCSVRSRKRKADVAIFLQDPDETLDSLEMTKKKQYQDRGPWSNEMTCKSPHKLIPTPEKEEHEPNPTNYSHFASLRFSPVSVSPLPRLGWANQDDVWRNMLNKDRIYLRDKNFFQKHPQLQPNMRAILLDWLMEVCEVYKLHRETFYLAQDFFDRFMATQKNVIKSRLQLIGITSLFIAAKLEEIYPPKLHQFSFITDGACTEDEITRMELIIMKDLGWCLSPMTIVSWFNVFLQVAYIRELQQFLRPQFPQEIYIQIVQLLDLCVLDICCLEYPYGVLAASAMYHFSCPELVEKVSGFKVTELQGCIKWLVPFAMAIKEGGKSKLNFFKGVDIEDAHNIQTHSGCLELMEKVYINQALLEEQNRTSPIPTGVLTPPQSNKKQKSDRAD</sequence>
<proteinExistence type="evidence at transcript level"/>
<dbReference type="EMBL" id="Z13966">
    <property type="protein sequence ID" value="CAA78370.1"/>
    <property type="molecule type" value="mRNA"/>
</dbReference>
<dbReference type="EMBL" id="L43512">
    <property type="protein sequence ID" value="AAA99294.1"/>
    <property type="molecule type" value="mRNA"/>
</dbReference>
<dbReference type="EMBL" id="BC077766">
    <property type="protein sequence ID" value="AAH77766.1"/>
    <property type="molecule type" value="mRNA"/>
</dbReference>
<dbReference type="RefSeq" id="NP_001081445.1">
    <property type="nucleotide sequence ID" value="NM_001087976.1"/>
</dbReference>
<dbReference type="RefSeq" id="XP_018112011.1">
    <property type="nucleotide sequence ID" value="XM_018256522.1"/>
</dbReference>
<dbReference type="RefSeq" id="XP_018112012.1">
    <property type="nucleotide sequence ID" value="XM_018256523.1"/>
</dbReference>
<dbReference type="RefSeq" id="XP_018112013.1">
    <property type="nucleotide sequence ID" value="XM_018256524.1"/>
</dbReference>
<dbReference type="SMR" id="P50756"/>
<dbReference type="BioGRID" id="99179">
    <property type="interactions" value="2"/>
</dbReference>
<dbReference type="iPTMnet" id="P50756"/>
<dbReference type="GeneID" id="397840"/>
<dbReference type="KEGG" id="xla:397840"/>
<dbReference type="AGR" id="Xenbase:XB-GENE-17330407"/>
<dbReference type="CTD" id="397840"/>
<dbReference type="Xenbase" id="XB-GENE-17330407">
    <property type="gene designation" value="ccne1.L"/>
</dbReference>
<dbReference type="OMA" id="KMEMTRK"/>
<dbReference type="OrthoDB" id="5590282at2759"/>
<dbReference type="Proteomes" id="UP000186698">
    <property type="component" value="Chromosome 4L"/>
</dbReference>
<dbReference type="Bgee" id="397840">
    <property type="expression patterns" value="Expressed in egg cell and 19 other cell types or tissues"/>
</dbReference>
<dbReference type="GO" id="GO:0097134">
    <property type="term" value="C:cyclin E1-CDK2 complex"/>
    <property type="evidence" value="ECO:0000318"/>
    <property type="project" value="GO_Central"/>
</dbReference>
<dbReference type="GO" id="GO:0005737">
    <property type="term" value="C:cytoplasm"/>
    <property type="evidence" value="ECO:0000318"/>
    <property type="project" value="GO_Central"/>
</dbReference>
<dbReference type="GO" id="GO:0005815">
    <property type="term" value="C:microtubule organizing center"/>
    <property type="evidence" value="ECO:0000318"/>
    <property type="project" value="GO_Central"/>
</dbReference>
<dbReference type="GO" id="GO:0005634">
    <property type="term" value="C:nucleus"/>
    <property type="evidence" value="ECO:0000318"/>
    <property type="project" value="GO_Central"/>
</dbReference>
<dbReference type="GO" id="GO:0016538">
    <property type="term" value="F:cyclin-dependent protein serine/threonine kinase regulator activity"/>
    <property type="evidence" value="ECO:0000318"/>
    <property type="project" value="GO_Central"/>
</dbReference>
<dbReference type="GO" id="GO:0051301">
    <property type="term" value="P:cell division"/>
    <property type="evidence" value="ECO:0007669"/>
    <property type="project" value="UniProtKB-KW"/>
</dbReference>
<dbReference type="GO" id="GO:0000082">
    <property type="term" value="P:G1/S transition of mitotic cell cycle"/>
    <property type="evidence" value="ECO:0000318"/>
    <property type="project" value="GO_Central"/>
</dbReference>
<dbReference type="GO" id="GO:1900087">
    <property type="term" value="P:positive regulation of G1/S transition of mitotic cell cycle"/>
    <property type="evidence" value="ECO:0000318"/>
    <property type="project" value="GO_Central"/>
</dbReference>
<dbReference type="CDD" id="cd20579">
    <property type="entry name" value="CYCLIN_CCNE1_rpt1"/>
    <property type="match status" value="1"/>
</dbReference>
<dbReference type="CDD" id="cd20581">
    <property type="entry name" value="CYCLIN_CCNE1_rpt2"/>
    <property type="match status" value="1"/>
</dbReference>
<dbReference type="FunFam" id="1.10.472.10:FF:000024">
    <property type="entry name" value="G1/S-specific cyclin-E1"/>
    <property type="match status" value="1"/>
</dbReference>
<dbReference type="Gene3D" id="1.10.472.10">
    <property type="entry name" value="Cyclin-like"/>
    <property type="match status" value="2"/>
</dbReference>
<dbReference type="InterPro" id="IPR039361">
    <property type="entry name" value="Cyclin"/>
</dbReference>
<dbReference type="InterPro" id="IPR013763">
    <property type="entry name" value="Cyclin-like_dom"/>
</dbReference>
<dbReference type="InterPro" id="IPR036915">
    <property type="entry name" value="Cyclin-like_sf"/>
</dbReference>
<dbReference type="InterPro" id="IPR004367">
    <property type="entry name" value="Cyclin_C-dom"/>
</dbReference>
<dbReference type="InterPro" id="IPR006671">
    <property type="entry name" value="Cyclin_N"/>
</dbReference>
<dbReference type="InterPro" id="IPR048258">
    <property type="entry name" value="Cyclins_cyclin-box"/>
</dbReference>
<dbReference type="PANTHER" id="PTHR10177">
    <property type="entry name" value="CYCLINS"/>
    <property type="match status" value="1"/>
</dbReference>
<dbReference type="Pfam" id="PF02984">
    <property type="entry name" value="Cyclin_C"/>
    <property type="match status" value="1"/>
</dbReference>
<dbReference type="Pfam" id="PF00134">
    <property type="entry name" value="Cyclin_N"/>
    <property type="match status" value="1"/>
</dbReference>
<dbReference type="SMART" id="SM00385">
    <property type="entry name" value="CYCLIN"/>
    <property type="match status" value="1"/>
</dbReference>
<dbReference type="SMART" id="SM01332">
    <property type="entry name" value="Cyclin_C"/>
    <property type="match status" value="1"/>
</dbReference>
<dbReference type="SUPFAM" id="SSF47954">
    <property type="entry name" value="Cyclin-like"/>
    <property type="match status" value="2"/>
</dbReference>
<dbReference type="PROSITE" id="PS00292">
    <property type="entry name" value="CYCLINS"/>
    <property type="match status" value="1"/>
</dbReference>
<keyword id="KW-0131">Cell cycle</keyword>
<keyword id="KW-0132">Cell division</keyword>
<keyword id="KW-0195">Cyclin</keyword>
<keyword id="KW-0539">Nucleus</keyword>
<keyword id="KW-0597">Phosphoprotein</keyword>
<keyword id="KW-1185">Reference proteome</keyword>
<protein>
    <recommendedName>
        <fullName>G1/S-specific cyclin-E1</fullName>
    </recommendedName>
</protein>